<sequence>MPLLKLWAGSLVMLAAVSLPLQAASPVKVGSKIDTEGALLGNIILQVLESHGVPTVNKVQLGTTPVVRGAITSGELDIYPEYTGNGAFFFKDENDAAWKNAQQGYEKVKKLDSEHNKLIWLTPAPANNTWTIAVRQDVAEKNKLTSLADLSRYLQEGGTFKLAASAEFIERADALPAFEKAYGFKLGQDQLLSLAGGDTAVTIKAAAQQTSGVNAAMAYGTDGPVAALGLQTLSDPQGVQPIYAPAPVVRESVLREYPQMAQWLQPVFASLDAKTLQQLNASIAVEGLDAKKVAADYLKQKGWTK</sequence>
<reference key="1">
    <citation type="submission" date="1993-10" db="EMBL/GenBank/DDBJ databases">
        <title>Automated multiplex sequencing of the E.coli genome.</title>
        <authorList>
            <person name="Richterich P."/>
            <person name="Lakey N."/>
            <person name="Gryan G."/>
            <person name="Jaehn L."/>
            <person name="Mintz L."/>
            <person name="Robison K."/>
            <person name="Church G.M."/>
        </authorList>
    </citation>
    <scope>NUCLEOTIDE SEQUENCE [LARGE SCALE GENOMIC DNA]</scope>
    <source>
        <strain>K12 / BHB2600</strain>
    </source>
</reference>
<reference key="2">
    <citation type="journal article" date="1997" name="Science">
        <title>The complete genome sequence of Escherichia coli K-12.</title>
        <authorList>
            <person name="Blattner F.R."/>
            <person name="Plunkett G. III"/>
            <person name="Bloch C.A."/>
            <person name="Perna N.T."/>
            <person name="Burland V."/>
            <person name="Riley M."/>
            <person name="Collado-Vides J."/>
            <person name="Glasner J.D."/>
            <person name="Rode C.K."/>
            <person name="Mayhew G.F."/>
            <person name="Gregor J."/>
            <person name="Davis N.W."/>
            <person name="Kirkpatrick H.A."/>
            <person name="Goeden M.A."/>
            <person name="Rose D.J."/>
            <person name="Mau B."/>
            <person name="Shao Y."/>
        </authorList>
    </citation>
    <scope>NUCLEOTIDE SEQUENCE [LARGE SCALE GENOMIC DNA]</scope>
    <source>
        <strain>K12 / MG1655 / ATCC 47076</strain>
    </source>
</reference>
<reference key="3">
    <citation type="journal article" date="2006" name="Mol. Syst. Biol.">
        <title>Highly accurate genome sequences of Escherichia coli K-12 strains MG1655 and W3110.</title>
        <authorList>
            <person name="Hayashi K."/>
            <person name="Morooka N."/>
            <person name="Yamamoto Y."/>
            <person name="Fujita K."/>
            <person name="Isono K."/>
            <person name="Choi S."/>
            <person name="Ohtsubo E."/>
            <person name="Baba T."/>
            <person name="Wanner B.L."/>
            <person name="Mori H."/>
            <person name="Horiuchi T."/>
        </authorList>
    </citation>
    <scope>NUCLEOTIDE SEQUENCE [LARGE SCALE GENOMIC DNA]</scope>
    <source>
        <strain>K12 / W3110 / ATCC 27325 / DSM 5911</strain>
    </source>
</reference>
<reference key="4">
    <citation type="journal article" date="2004" name="FEMS Microbiol. Lett.">
        <title>Sigma(s)-dependent regulation of yehZYXW, which encodes a putative osmoprotectant ABC transporter of Escherichia coli.</title>
        <authorList>
            <person name="Checroun C."/>
            <person name="Gutierrez C."/>
        </authorList>
    </citation>
    <scope>INDUCTION</scope>
    <source>
        <strain>K12 / MC4100 / ATCC 35695 / DSM 6574</strain>
    </source>
</reference>
<reference key="5">
    <citation type="journal article" date="2015" name="Biochemistry">
        <title>YehZYXW of Escherichia coli is a low-affinity, non-osmoregulatory betaine-specific ABC transporter.</title>
        <authorList>
            <person name="Lang S."/>
            <person name="Cressatti M."/>
            <person name="Mendoza K.E."/>
            <person name="Coumoundouros C.N."/>
            <person name="Plater S.M."/>
            <person name="Culham D.E."/>
            <person name="Kimber M.S."/>
            <person name="Wood J.M."/>
        </authorList>
    </citation>
    <scope>X-RAY CRYSTALLOGRAPHY (1.5 ANGSTROMS)</scope>
    <scope>FUNCTION IN GLYCINE BETAINE UPTAKE</scope>
    <source>
        <strain>K12 / MG1655 / ATCC 47076</strain>
    </source>
</reference>
<accession>P33362</accession>
<accession>Q2MAU8</accession>
<dbReference type="EMBL" id="U00007">
    <property type="protein sequence ID" value="AAA60494.1"/>
    <property type="molecule type" value="Genomic_DNA"/>
</dbReference>
<dbReference type="EMBL" id="U00096">
    <property type="protein sequence ID" value="AAC75192.1"/>
    <property type="molecule type" value="Genomic_DNA"/>
</dbReference>
<dbReference type="EMBL" id="AP009048">
    <property type="protein sequence ID" value="BAE76608.1"/>
    <property type="molecule type" value="Genomic_DNA"/>
</dbReference>
<dbReference type="PIR" id="B64981">
    <property type="entry name" value="B64981"/>
</dbReference>
<dbReference type="RefSeq" id="NP_416635.1">
    <property type="nucleotide sequence ID" value="NC_000913.3"/>
</dbReference>
<dbReference type="RefSeq" id="WP_001130308.1">
    <property type="nucleotide sequence ID" value="NZ_LN832404.1"/>
</dbReference>
<dbReference type="PDB" id="4WEP">
    <property type="method" value="X-ray"/>
    <property type="resolution" value="1.50 A"/>
    <property type="chains" value="A/B=24-305"/>
</dbReference>
<dbReference type="PDBsum" id="4WEP"/>
<dbReference type="SMR" id="P33362"/>
<dbReference type="BioGRID" id="4260450">
    <property type="interactions" value="115"/>
</dbReference>
<dbReference type="ComplexPortal" id="CPX-4449">
    <property type="entry name" value="Low affinity betaine ABC transporter complex"/>
</dbReference>
<dbReference type="FunCoup" id="P33362">
    <property type="interactions" value="301"/>
</dbReference>
<dbReference type="IntAct" id="P33362">
    <property type="interactions" value="3"/>
</dbReference>
<dbReference type="STRING" id="511145.b2131"/>
<dbReference type="TCDB" id="3.A.1.12.15">
    <property type="family name" value="the atp-binding cassette (abc) superfamily"/>
</dbReference>
<dbReference type="jPOST" id="P33362"/>
<dbReference type="PaxDb" id="511145-b2131"/>
<dbReference type="EnsemblBacteria" id="AAC75192">
    <property type="protein sequence ID" value="AAC75192"/>
    <property type="gene ID" value="b2131"/>
</dbReference>
<dbReference type="GeneID" id="946681"/>
<dbReference type="KEGG" id="ecj:JW2119"/>
<dbReference type="KEGG" id="eco:b2131"/>
<dbReference type="KEGG" id="ecoc:C3026_11950"/>
<dbReference type="PATRIC" id="fig|1411691.4.peg.113"/>
<dbReference type="EchoBASE" id="EB1950"/>
<dbReference type="eggNOG" id="COG1732">
    <property type="taxonomic scope" value="Bacteria"/>
</dbReference>
<dbReference type="HOGENOM" id="CLU_038355_1_1_6"/>
<dbReference type="InParanoid" id="P33362"/>
<dbReference type="OMA" id="KDPAWKN"/>
<dbReference type="OrthoDB" id="9781705at2"/>
<dbReference type="PhylomeDB" id="P33362"/>
<dbReference type="BioCyc" id="EcoCyc:YEHZ-MONOMER"/>
<dbReference type="BioCyc" id="MetaCyc:YEHZ-MONOMER"/>
<dbReference type="EvolutionaryTrace" id="P33362"/>
<dbReference type="PRO" id="PR:P33362"/>
<dbReference type="Proteomes" id="UP000000625">
    <property type="component" value="Chromosome"/>
</dbReference>
<dbReference type="GO" id="GO:0055052">
    <property type="term" value="C:ATP-binding cassette (ABC) transporter complex, substrate-binding subunit-containing"/>
    <property type="evidence" value="ECO:0000303"/>
    <property type="project" value="ComplexPortal"/>
</dbReference>
<dbReference type="GO" id="GO:0016020">
    <property type="term" value="C:membrane"/>
    <property type="evidence" value="ECO:0000303"/>
    <property type="project" value="ComplexPortal"/>
</dbReference>
<dbReference type="GO" id="GO:0042597">
    <property type="term" value="C:periplasmic space"/>
    <property type="evidence" value="ECO:0007669"/>
    <property type="project" value="UniProtKB-SubCell"/>
</dbReference>
<dbReference type="GO" id="GO:0022857">
    <property type="term" value="F:transmembrane transporter activity"/>
    <property type="evidence" value="ECO:0007669"/>
    <property type="project" value="InterPro"/>
</dbReference>
<dbReference type="GO" id="GO:0006865">
    <property type="term" value="P:amino acid transport"/>
    <property type="evidence" value="ECO:0007669"/>
    <property type="project" value="UniProtKB-KW"/>
</dbReference>
<dbReference type="GO" id="GO:0015838">
    <property type="term" value="P:amino-acid betaine transport"/>
    <property type="evidence" value="ECO:0000303"/>
    <property type="project" value="ComplexPortal"/>
</dbReference>
<dbReference type="GO" id="GO:0071474">
    <property type="term" value="P:cellular hyperosmotic response"/>
    <property type="evidence" value="ECO:0000270"/>
    <property type="project" value="EcoCyc"/>
</dbReference>
<dbReference type="GO" id="GO:0031460">
    <property type="term" value="P:glycine betaine transport"/>
    <property type="evidence" value="ECO:0000314"/>
    <property type="project" value="EcoCyc"/>
</dbReference>
<dbReference type="CDD" id="cd13616">
    <property type="entry name" value="PBP2_OsmF"/>
    <property type="match status" value="1"/>
</dbReference>
<dbReference type="FunFam" id="3.40.190.120:FF:000001">
    <property type="entry name" value="Amine ABC transporter substrate-binding protein"/>
    <property type="match status" value="1"/>
</dbReference>
<dbReference type="Gene3D" id="3.40.190.120">
    <property type="entry name" value="Osmoprotection protein (prox), domain 2"/>
    <property type="match status" value="1"/>
</dbReference>
<dbReference type="Gene3D" id="3.40.190.10">
    <property type="entry name" value="Periplasmic binding protein-like II"/>
    <property type="match status" value="1"/>
</dbReference>
<dbReference type="InterPro" id="IPR007210">
    <property type="entry name" value="ABC_Gly_betaine_transp_sub-bd"/>
</dbReference>
<dbReference type="Pfam" id="PF04069">
    <property type="entry name" value="OpuAC"/>
    <property type="match status" value="1"/>
</dbReference>
<dbReference type="SUPFAM" id="SSF53850">
    <property type="entry name" value="Periplasmic binding protein-like II"/>
    <property type="match status" value="1"/>
</dbReference>
<evidence type="ECO:0000255" key="1"/>
<evidence type="ECO:0000269" key="2">
    <source>
    </source>
</evidence>
<evidence type="ECO:0000269" key="3">
    <source>
    </source>
</evidence>
<evidence type="ECO:0000305" key="4"/>
<evidence type="ECO:0000305" key="5">
    <source>
    </source>
</evidence>
<evidence type="ECO:0000305" key="6">
    <source>
    </source>
</evidence>
<evidence type="ECO:0007829" key="7">
    <source>
        <dbReference type="PDB" id="4WEP"/>
    </source>
</evidence>
<keyword id="KW-0002">3D-structure</keyword>
<keyword id="KW-0029">Amino-acid transport</keyword>
<keyword id="KW-0574">Periplasm</keyword>
<keyword id="KW-1185">Reference proteome</keyword>
<keyword id="KW-0732">Signal</keyword>
<keyword id="KW-0813">Transport</keyword>
<gene>
    <name type="primary">yehZ</name>
    <name type="synonym">osmF</name>
    <name type="ordered locus">b2131</name>
    <name type="ordered locus">JW2119</name>
</gene>
<name>YEHZ_ECOLI</name>
<comment type="function">
    <text evidence="3">Part of an ABC transporter complex involved in low-affinity glycine betaine uptake. Binds glycine betaine with low affinity.</text>
</comment>
<comment type="subunit">
    <text evidence="4">The complex is composed of two ATP-binding proteins (YehX), two transmembrane proteins (YehW and YehY) and a solute-binding protein (YehZ).</text>
</comment>
<comment type="subcellular location">
    <subcellularLocation>
        <location evidence="4">Periplasm</location>
    </subcellularLocation>
</comment>
<comment type="induction">
    <text evidence="2">Expression is sigma S-dependent. Induced by both osmotic shock and entry into stationary phase.</text>
</comment>
<comment type="similarity">
    <text evidence="4">Belongs to the OsmX family.</text>
</comment>
<comment type="caution">
    <text evidence="5 6">Was originally thought to be part of an osmoprotectant uptake system (PubMed:15251200). However, it was shown later that the complex does not mediate osmotic stress protection (PubMed:26325238).</text>
</comment>
<organism>
    <name type="scientific">Escherichia coli (strain K12)</name>
    <dbReference type="NCBI Taxonomy" id="83333"/>
    <lineage>
        <taxon>Bacteria</taxon>
        <taxon>Pseudomonadati</taxon>
        <taxon>Pseudomonadota</taxon>
        <taxon>Gammaproteobacteria</taxon>
        <taxon>Enterobacterales</taxon>
        <taxon>Enterobacteriaceae</taxon>
        <taxon>Escherichia</taxon>
    </lineage>
</organism>
<proteinExistence type="evidence at protein level"/>
<protein>
    <recommendedName>
        <fullName evidence="4">Glycine betaine-binding protein YehZ</fullName>
    </recommendedName>
</protein>
<feature type="signal peptide" evidence="1">
    <location>
        <begin position="1"/>
        <end position="23"/>
    </location>
</feature>
<feature type="chain" id="PRO_0000013871" description="Glycine betaine-binding protein YehZ">
    <location>
        <begin position="24"/>
        <end position="305"/>
    </location>
</feature>
<feature type="strand" evidence="7">
    <location>
        <begin position="27"/>
        <end position="34"/>
    </location>
</feature>
<feature type="helix" evidence="7">
    <location>
        <begin position="35"/>
        <end position="50"/>
    </location>
</feature>
<feature type="strand" evidence="7">
    <location>
        <begin position="55"/>
        <end position="63"/>
    </location>
</feature>
<feature type="helix" evidence="7">
    <location>
        <begin position="64"/>
        <end position="71"/>
    </location>
</feature>
<feature type="turn" evidence="7">
    <location>
        <begin position="72"/>
        <end position="74"/>
    </location>
</feature>
<feature type="strand" evidence="7">
    <location>
        <begin position="77"/>
        <end position="82"/>
    </location>
</feature>
<feature type="helix" evidence="7">
    <location>
        <begin position="83"/>
        <end position="85"/>
    </location>
</feature>
<feature type="helix" evidence="7">
    <location>
        <begin position="86"/>
        <end position="89"/>
    </location>
</feature>
<feature type="helix" evidence="7">
    <location>
        <begin position="96"/>
        <end position="99"/>
    </location>
</feature>
<feature type="helix" evidence="7">
    <location>
        <begin position="101"/>
        <end position="116"/>
    </location>
</feature>
<feature type="strand" evidence="7">
    <location>
        <begin position="118"/>
        <end position="120"/>
    </location>
</feature>
<feature type="strand" evidence="7">
    <location>
        <begin position="129"/>
        <end position="135"/>
    </location>
</feature>
<feature type="helix" evidence="7">
    <location>
        <begin position="136"/>
        <end position="141"/>
    </location>
</feature>
<feature type="helix" evidence="7">
    <location>
        <begin position="147"/>
        <end position="155"/>
    </location>
</feature>
<feature type="strand" evidence="7">
    <location>
        <begin position="162"/>
        <end position="165"/>
    </location>
</feature>
<feature type="helix" evidence="7">
    <location>
        <begin position="166"/>
        <end position="170"/>
    </location>
</feature>
<feature type="helix" evidence="7">
    <location>
        <begin position="175"/>
        <end position="182"/>
    </location>
</feature>
<feature type="helix" evidence="7">
    <location>
        <begin position="188"/>
        <end position="190"/>
    </location>
</feature>
<feature type="strand" evidence="7">
    <location>
        <begin position="191"/>
        <end position="194"/>
    </location>
</feature>
<feature type="helix" evidence="7">
    <location>
        <begin position="199"/>
        <end position="207"/>
    </location>
</feature>
<feature type="helix" evidence="7">
    <location>
        <begin position="210"/>
        <end position="212"/>
    </location>
</feature>
<feature type="strand" evidence="7">
    <location>
        <begin position="215"/>
        <end position="219"/>
    </location>
</feature>
<feature type="helix" evidence="7">
    <location>
        <begin position="223"/>
        <end position="227"/>
    </location>
</feature>
<feature type="strand" evidence="7">
    <location>
        <begin position="230"/>
        <end position="232"/>
    </location>
</feature>
<feature type="strand" evidence="7">
    <location>
        <begin position="245"/>
        <end position="250"/>
    </location>
</feature>
<feature type="helix" evidence="7">
    <location>
        <begin position="251"/>
        <end position="256"/>
    </location>
</feature>
<feature type="helix" evidence="7">
    <location>
        <begin position="260"/>
        <end position="269"/>
    </location>
</feature>
<feature type="helix" evidence="7">
    <location>
        <begin position="273"/>
        <end position="284"/>
    </location>
</feature>
<feature type="helix" evidence="7">
    <location>
        <begin position="290"/>
        <end position="300"/>
    </location>
</feature>